<feature type="chain" id="PRO_0000119470" description="GTP cyclohydrolase 1">
    <location>
        <begin position="1"/>
        <end position="220"/>
    </location>
</feature>
<feature type="binding site" evidence="2">
    <location>
        <position position="109"/>
    </location>
    <ligand>
        <name>Zn(2+)</name>
        <dbReference type="ChEBI" id="CHEBI:29105"/>
    </ligand>
</feature>
<feature type="binding site" evidence="2">
    <location>
        <position position="112"/>
    </location>
    <ligand>
        <name>Zn(2+)</name>
        <dbReference type="ChEBI" id="CHEBI:29105"/>
    </ligand>
</feature>
<feature type="binding site" evidence="2">
    <location>
        <position position="180"/>
    </location>
    <ligand>
        <name>Zn(2+)</name>
        <dbReference type="ChEBI" id="CHEBI:29105"/>
    </ligand>
</feature>
<feature type="helix" evidence="4">
    <location>
        <begin position="6"/>
        <end position="18"/>
    </location>
</feature>
<feature type="helix" evidence="4">
    <location>
        <begin position="31"/>
        <end position="48"/>
    </location>
</feature>
<feature type="turn" evidence="4">
    <location>
        <begin position="56"/>
        <end position="60"/>
    </location>
</feature>
<feature type="helix" evidence="4">
    <location>
        <begin position="61"/>
        <end position="71"/>
    </location>
</feature>
<feature type="turn" evidence="4">
    <location>
        <begin position="72"/>
        <end position="74"/>
    </location>
</feature>
<feature type="helix" evidence="4">
    <location>
        <begin position="75"/>
        <end position="77"/>
    </location>
</feature>
<feature type="helix" evidence="4">
    <location>
        <begin position="79"/>
        <end position="81"/>
    </location>
</feature>
<feature type="strand" evidence="4">
    <location>
        <begin position="87"/>
        <end position="89"/>
    </location>
</feature>
<feature type="strand" evidence="4">
    <location>
        <begin position="98"/>
        <end position="109"/>
    </location>
</feature>
<feature type="turn" evidence="4">
    <location>
        <begin position="110"/>
        <end position="112"/>
    </location>
</feature>
<feature type="strand" evidence="4">
    <location>
        <begin position="115"/>
        <end position="124"/>
    </location>
</feature>
<feature type="strand" evidence="4">
    <location>
        <begin position="127"/>
        <end position="131"/>
    </location>
</feature>
<feature type="helix" evidence="4">
    <location>
        <begin position="133"/>
        <end position="144"/>
    </location>
</feature>
<feature type="strand" evidence="4">
    <location>
        <begin position="145"/>
        <end position="148"/>
    </location>
</feature>
<feature type="helix" evidence="4">
    <location>
        <begin position="150"/>
        <end position="165"/>
    </location>
</feature>
<feature type="strand" evidence="4">
    <location>
        <begin position="170"/>
        <end position="178"/>
    </location>
</feature>
<feature type="helix" evidence="4">
    <location>
        <begin position="179"/>
        <end position="182"/>
    </location>
</feature>
<feature type="strand" evidence="4">
    <location>
        <begin position="192"/>
        <end position="198"/>
    </location>
</feature>
<feature type="helix" evidence="4">
    <location>
        <begin position="201"/>
        <end position="204"/>
    </location>
</feature>
<feature type="helix" evidence="4">
    <location>
        <begin position="206"/>
        <end position="216"/>
    </location>
</feature>
<feature type="turn" evidence="4">
    <location>
        <begin position="217"/>
        <end position="219"/>
    </location>
</feature>
<evidence type="ECO:0000250" key="1"/>
<evidence type="ECO:0000255" key="2">
    <source>
        <dbReference type="HAMAP-Rule" id="MF_00223"/>
    </source>
</evidence>
<evidence type="ECO:0000305" key="3"/>
<evidence type="ECO:0007829" key="4">
    <source>
        <dbReference type="PDB" id="4DU6"/>
    </source>
</evidence>
<dbReference type="EC" id="3.5.4.16" evidence="2"/>
<dbReference type="EMBL" id="AL590842">
    <property type="protein sequence ID" value="CAL20151.1"/>
    <property type="molecule type" value="Genomic_DNA"/>
</dbReference>
<dbReference type="EMBL" id="AE009952">
    <property type="protein sequence ID" value="AAM86217.1"/>
    <property type="status" value="ALT_INIT"/>
    <property type="molecule type" value="Genomic_DNA"/>
</dbReference>
<dbReference type="EMBL" id="AE017042">
    <property type="protein sequence ID" value="AAS61636.1"/>
    <property type="status" value="ALT_INIT"/>
    <property type="molecule type" value="Genomic_DNA"/>
</dbReference>
<dbReference type="PIR" id="AE0183">
    <property type="entry name" value="AE0183"/>
</dbReference>
<dbReference type="RefSeq" id="WP_002211960.1">
    <property type="nucleotide sequence ID" value="NZ_WUCM01000063.1"/>
</dbReference>
<dbReference type="RefSeq" id="YP_002346521.1">
    <property type="nucleotide sequence ID" value="NC_003143.1"/>
</dbReference>
<dbReference type="PDB" id="4DU6">
    <property type="method" value="X-ray"/>
    <property type="resolution" value="2.11 A"/>
    <property type="chains" value="A/B/C/D/E=1-220"/>
</dbReference>
<dbReference type="PDBsum" id="4DU6"/>
<dbReference type="SMR" id="Q8ZG15"/>
<dbReference type="STRING" id="214092.YPO1505"/>
<dbReference type="PaxDb" id="214092-YPO1505"/>
<dbReference type="DNASU" id="1147611"/>
<dbReference type="EnsemblBacteria" id="AAS61636">
    <property type="protein sequence ID" value="AAS61636"/>
    <property type="gene ID" value="YP_1395"/>
</dbReference>
<dbReference type="GeneID" id="57977063"/>
<dbReference type="KEGG" id="ype:YPO1505"/>
<dbReference type="KEGG" id="ypk:y2664"/>
<dbReference type="KEGG" id="ypm:YP_1395"/>
<dbReference type="PATRIC" id="fig|214092.21.peg.1836"/>
<dbReference type="eggNOG" id="COG0302">
    <property type="taxonomic scope" value="Bacteria"/>
</dbReference>
<dbReference type="HOGENOM" id="CLU_049768_3_2_6"/>
<dbReference type="OrthoDB" id="9801207at2"/>
<dbReference type="UniPathway" id="UPA00848">
    <property type="reaction ID" value="UER00151"/>
</dbReference>
<dbReference type="EvolutionaryTrace" id="Q8ZG15"/>
<dbReference type="Proteomes" id="UP000000815">
    <property type="component" value="Chromosome"/>
</dbReference>
<dbReference type="Proteomes" id="UP000001019">
    <property type="component" value="Chromosome"/>
</dbReference>
<dbReference type="Proteomes" id="UP000002490">
    <property type="component" value="Chromosome"/>
</dbReference>
<dbReference type="GO" id="GO:0005737">
    <property type="term" value="C:cytoplasm"/>
    <property type="evidence" value="ECO:0000318"/>
    <property type="project" value="GO_Central"/>
</dbReference>
<dbReference type="GO" id="GO:0005525">
    <property type="term" value="F:GTP binding"/>
    <property type="evidence" value="ECO:0000318"/>
    <property type="project" value="GO_Central"/>
</dbReference>
<dbReference type="GO" id="GO:0003934">
    <property type="term" value="F:GTP cyclohydrolase I activity"/>
    <property type="evidence" value="ECO:0000318"/>
    <property type="project" value="GO_Central"/>
</dbReference>
<dbReference type="GO" id="GO:0008270">
    <property type="term" value="F:zinc ion binding"/>
    <property type="evidence" value="ECO:0000318"/>
    <property type="project" value="GO_Central"/>
</dbReference>
<dbReference type="GO" id="GO:0006730">
    <property type="term" value="P:one-carbon metabolic process"/>
    <property type="evidence" value="ECO:0007669"/>
    <property type="project" value="UniProtKB-UniRule"/>
</dbReference>
<dbReference type="GO" id="GO:0006729">
    <property type="term" value="P:tetrahydrobiopterin biosynthetic process"/>
    <property type="evidence" value="ECO:0000318"/>
    <property type="project" value="GO_Central"/>
</dbReference>
<dbReference type="GO" id="GO:0046654">
    <property type="term" value="P:tetrahydrofolate biosynthetic process"/>
    <property type="evidence" value="ECO:0007669"/>
    <property type="project" value="UniProtKB-UniRule"/>
</dbReference>
<dbReference type="FunFam" id="1.10.286.10:FF:000002">
    <property type="entry name" value="GTP cyclohydrolase 1"/>
    <property type="match status" value="1"/>
</dbReference>
<dbReference type="FunFam" id="3.30.1130.10:FF:000001">
    <property type="entry name" value="GTP cyclohydrolase 1"/>
    <property type="match status" value="1"/>
</dbReference>
<dbReference type="Gene3D" id="1.10.286.10">
    <property type="match status" value="1"/>
</dbReference>
<dbReference type="Gene3D" id="3.30.1130.10">
    <property type="match status" value="1"/>
</dbReference>
<dbReference type="HAMAP" id="MF_00223">
    <property type="entry name" value="FolE"/>
    <property type="match status" value="1"/>
</dbReference>
<dbReference type="InterPro" id="IPR043133">
    <property type="entry name" value="GTP-CH-I_C/QueF"/>
</dbReference>
<dbReference type="InterPro" id="IPR043134">
    <property type="entry name" value="GTP-CH-I_N"/>
</dbReference>
<dbReference type="InterPro" id="IPR001474">
    <property type="entry name" value="GTP_CycHdrlase_I"/>
</dbReference>
<dbReference type="InterPro" id="IPR018234">
    <property type="entry name" value="GTP_CycHdrlase_I_CS"/>
</dbReference>
<dbReference type="InterPro" id="IPR020602">
    <property type="entry name" value="GTP_CycHdrlase_I_dom"/>
</dbReference>
<dbReference type="NCBIfam" id="TIGR00063">
    <property type="entry name" value="folE"/>
    <property type="match status" value="1"/>
</dbReference>
<dbReference type="NCBIfam" id="NF006824">
    <property type="entry name" value="PRK09347.1-1"/>
    <property type="match status" value="1"/>
</dbReference>
<dbReference type="NCBIfam" id="NF006825">
    <property type="entry name" value="PRK09347.1-2"/>
    <property type="match status" value="1"/>
</dbReference>
<dbReference type="NCBIfam" id="NF006826">
    <property type="entry name" value="PRK09347.1-3"/>
    <property type="match status" value="1"/>
</dbReference>
<dbReference type="PANTHER" id="PTHR11109:SF7">
    <property type="entry name" value="GTP CYCLOHYDROLASE 1"/>
    <property type="match status" value="1"/>
</dbReference>
<dbReference type="PANTHER" id="PTHR11109">
    <property type="entry name" value="GTP CYCLOHYDROLASE I"/>
    <property type="match status" value="1"/>
</dbReference>
<dbReference type="Pfam" id="PF01227">
    <property type="entry name" value="GTP_cyclohydroI"/>
    <property type="match status" value="1"/>
</dbReference>
<dbReference type="SUPFAM" id="SSF55620">
    <property type="entry name" value="Tetrahydrobiopterin biosynthesis enzymes-like"/>
    <property type="match status" value="1"/>
</dbReference>
<dbReference type="PROSITE" id="PS00859">
    <property type="entry name" value="GTP_CYCLOHYDROL_1_1"/>
    <property type="match status" value="1"/>
</dbReference>
<dbReference type="PROSITE" id="PS00860">
    <property type="entry name" value="GTP_CYCLOHYDROL_1_2"/>
    <property type="match status" value="1"/>
</dbReference>
<organism>
    <name type="scientific">Yersinia pestis</name>
    <dbReference type="NCBI Taxonomy" id="632"/>
    <lineage>
        <taxon>Bacteria</taxon>
        <taxon>Pseudomonadati</taxon>
        <taxon>Pseudomonadota</taxon>
        <taxon>Gammaproteobacteria</taxon>
        <taxon>Enterobacterales</taxon>
        <taxon>Yersiniaceae</taxon>
        <taxon>Yersinia</taxon>
    </lineage>
</organism>
<accession>Q8ZG15</accession>
<accession>Q0WGR7</accession>
<name>GCH1_YERPE</name>
<comment type="catalytic activity">
    <reaction evidence="2">
        <text>GTP + H2O = 7,8-dihydroneopterin 3'-triphosphate + formate + H(+)</text>
        <dbReference type="Rhea" id="RHEA:17473"/>
        <dbReference type="ChEBI" id="CHEBI:15377"/>
        <dbReference type="ChEBI" id="CHEBI:15378"/>
        <dbReference type="ChEBI" id="CHEBI:15740"/>
        <dbReference type="ChEBI" id="CHEBI:37565"/>
        <dbReference type="ChEBI" id="CHEBI:58462"/>
        <dbReference type="EC" id="3.5.4.16"/>
    </reaction>
</comment>
<comment type="pathway">
    <text evidence="2">Cofactor biosynthesis; 7,8-dihydroneopterin triphosphate biosynthesis; 7,8-dihydroneopterin triphosphate from GTP: step 1/1.</text>
</comment>
<comment type="subunit">
    <text evidence="1">Toroid-shaped homodecamer, composed of two pentamers of five dimers.</text>
</comment>
<comment type="similarity">
    <text evidence="2">Belongs to the GTP cyclohydrolase I family.</text>
</comment>
<comment type="sequence caution" evidence="3">
    <conflict type="erroneous initiation">
        <sequence resource="EMBL-CDS" id="AAM86217"/>
    </conflict>
</comment>
<comment type="sequence caution" evidence="3">
    <conflict type="erroneous initiation">
        <sequence resource="EMBL-CDS" id="AAS61636"/>
    </conflict>
</comment>
<reference key="1">
    <citation type="journal article" date="2001" name="Nature">
        <title>Genome sequence of Yersinia pestis, the causative agent of plague.</title>
        <authorList>
            <person name="Parkhill J."/>
            <person name="Wren B.W."/>
            <person name="Thomson N.R."/>
            <person name="Titball R.W."/>
            <person name="Holden M.T.G."/>
            <person name="Prentice M.B."/>
            <person name="Sebaihia M."/>
            <person name="James K.D."/>
            <person name="Churcher C.M."/>
            <person name="Mungall K.L."/>
            <person name="Baker S."/>
            <person name="Basham D."/>
            <person name="Bentley S.D."/>
            <person name="Brooks K."/>
            <person name="Cerdeno-Tarraga A.-M."/>
            <person name="Chillingworth T."/>
            <person name="Cronin A."/>
            <person name="Davies R.M."/>
            <person name="Davis P."/>
            <person name="Dougan G."/>
            <person name="Feltwell T."/>
            <person name="Hamlin N."/>
            <person name="Holroyd S."/>
            <person name="Jagels K."/>
            <person name="Karlyshev A.V."/>
            <person name="Leather S."/>
            <person name="Moule S."/>
            <person name="Oyston P.C.F."/>
            <person name="Quail M.A."/>
            <person name="Rutherford K.M."/>
            <person name="Simmonds M."/>
            <person name="Skelton J."/>
            <person name="Stevens K."/>
            <person name="Whitehead S."/>
            <person name="Barrell B.G."/>
        </authorList>
    </citation>
    <scope>NUCLEOTIDE SEQUENCE [LARGE SCALE GENOMIC DNA]</scope>
    <source>
        <strain>CO-92 / Biovar Orientalis</strain>
    </source>
</reference>
<reference key="2">
    <citation type="journal article" date="2002" name="J. Bacteriol.">
        <title>Genome sequence of Yersinia pestis KIM.</title>
        <authorList>
            <person name="Deng W."/>
            <person name="Burland V."/>
            <person name="Plunkett G. III"/>
            <person name="Boutin A."/>
            <person name="Mayhew G.F."/>
            <person name="Liss P."/>
            <person name="Perna N.T."/>
            <person name="Rose D.J."/>
            <person name="Mau B."/>
            <person name="Zhou S."/>
            <person name="Schwartz D.C."/>
            <person name="Fetherston J.D."/>
            <person name="Lindler L.E."/>
            <person name="Brubaker R.R."/>
            <person name="Plano G.V."/>
            <person name="Straley S.C."/>
            <person name="McDonough K.A."/>
            <person name="Nilles M.L."/>
            <person name="Matson J.S."/>
            <person name="Blattner F.R."/>
            <person name="Perry R.D."/>
        </authorList>
    </citation>
    <scope>NUCLEOTIDE SEQUENCE [LARGE SCALE GENOMIC DNA]</scope>
    <source>
        <strain>KIM10+ / Biovar Mediaevalis</strain>
    </source>
</reference>
<reference key="3">
    <citation type="journal article" date="2004" name="DNA Res.">
        <title>Complete genome sequence of Yersinia pestis strain 91001, an isolate avirulent to humans.</title>
        <authorList>
            <person name="Song Y."/>
            <person name="Tong Z."/>
            <person name="Wang J."/>
            <person name="Wang L."/>
            <person name="Guo Z."/>
            <person name="Han Y."/>
            <person name="Zhang J."/>
            <person name="Pei D."/>
            <person name="Zhou D."/>
            <person name="Qin H."/>
            <person name="Pang X."/>
            <person name="Han Y."/>
            <person name="Zhai J."/>
            <person name="Li M."/>
            <person name="Cui B."/>
            <person name="Qi Z."/>
            <person name="Jin L."/>
            <person name="Dai R."/>
            <person name="Chen F."/>
            <person name="Li S."/>
            <person name="Ye C."/>
            <person name="Du Z."/>
            <person name="Lin W."/>
            <person name="Wang J."/>
            <person name="Yu J."/>
            <person name="Yang H."/>
            <person name="Wang J."/>
            <person name="Huang P."/>
            <person name="Yang R."/>
        </authorList>
    </citation>
    <scope>NUCLEOTIDE SEQUENCE [LARGE SCALE GENOMIC DNA]</scope>
    <source>
        <strain>91001 / Biovar Mediaevalis</strain>
    </source>
</reference>
<gene>
    <name evidence="2" type="primary">folE</name>
    <name type="ordered locus">YPO1505</name>
    <name type="ordered locus">y2664</name>
    <name type="ordered locus">YP_1395</name>
</gene>
<sequence>MSSLSKEAELVHQALLARGLETPLRKPELDAETRKTRIQAHMTEVMHLLNLDLTDDSLADTPRRIAKMYVDEIFSGLDYENFPKITLIQNKMKVDEMVTVRDITLTSTCEHHFVTIDGKATVAYIPKDSVIGLSKINRIVQFFAQRPQVQERLTQQILLALQTLLGTNNVAVSIDAVHYCVKARGIRDATSATTTTSLGGLFKSSQNTRQEFLRAVRHHG</sequence>
<keyword id="KW-0002">3D-structure</keyword>
<keyword id="KW-0342">GTP-binding</keyword>
<keyword id="KW-0378">Hydrolase</keyword>
<keyword id="KW-0479">Metal-binding</keyword>
<keyword id="KW-0547">Nucleotide-binding</keyword>
<keyword id="KW-0554">One-carbon metabolism</keyword>
<keyword id="KW-1185">Reference proteome</keyword>
<keyword id="KW-0862">Zinc</keyword>
<protein>
    <recommendedName>
        <fullName evidence="2">GTP cyclohydrolase 1</fullName>
        <ecNumber evidence="2">3.5.4.16</ecNumber>
    </recommendedName>
    <alternativeName>
        <fullName evidence="2">GTP cyclohydrolase I</fullName>
        <shortName evidence="2">GTP-CH-I</shortName>
    </alternativeName>
</protein>
<proteinExistence type="evidence at protein level"/>